<protein>
    <recommendedName>
        <fullName evidence="4">Transcription factor MYCGRDRAFT_87993</fullName>
    </recommendedName>
    <alternativeName>
        <fullName evidence="4">Conidial pigment biosynthesis cluster 29 protein MYCGRDRAFT_87993</fullName>
    </alternativeName>
</protein>
<accession>F9XMW5</accession>
<evidence type="ECO:0000255" key="1">
    <source>
        <dbReference type="PROSITE-ProRule" id="PRU00042"/>
    </source>
</evidence>
<evidence type="ECO:0000255" key="2">
    <source>
        <dbReference type="PROSITE-ProRule" id="PRU00227"/>
    </source>
</evidence>
<evidence type="ECO:0000256" key="3">
    <source>
        <dbReference type="SAM" id="MobiDB-lite"/>
    </source>
</evidence>
<evidence type="ECO:0000303" key="4">
    <source>
    </source>
</evidence>
<evidence type="ECO:0000305" key="5">
    <source>
    </source>
</evidence>
<proteinExistence type="inferred from homology"/>
<keyword id="KW-0238">DNA-binding</keyword>
<keyword id="KW-0479">Metal-binding</keyword>
<keyword id="KW-0539">Nucleus</keyword>
<keyword id="KW-1185">Reference proteome</keyword>
<keyword id="KW-0677">Repeat</keyword>
<keyword id="KW-0804">Transcription</keyword>
<keyword id="KW-0805">Transcription regulation</keyword>
<keyword id="KW-0862">Zinc</keyword>
<keyword id="KW-0863">Zinc-finger</keyword>
<reference key="1">
    <citation type="journal article" date="2011" name="PLoS Genet.">
        <title>Finished genome of the fungal wheat pathogen Mycosphaerella graminicola reveals dispensome structure, chromosome plasticity, and stealth pathogenesis.</title>
        <authorList>
            <person name="Goodwin S.B."/>
            <person name="Ben M'barek S."/>
            <person name="Dhillon B."/>
            <person name="Wittenberg A.H.J."/>
            <person name="Crane C.F."/>
            <person name="Hane J.K."/>
            <person name="Foster A.J."/>
            <person name="Van der Lee T.A.J."/>
            <person name="Grimwood J."/>
            <person name="Aerts A."/>
            <person name="Antoniw J."/>
            <person name="Bailey A."/>
            <person name="Bluhm B."/>
            <person name="Bowler J."/>
            <person name="Bristow J."/>
            <person name="van der Burgt A."/>
            <person name="Canto-Canche B."/>
            <person name="Churchill A.C.L."/>
            <person name="Conde-Ferraez L."/>
            <person name="Cools H.J."/>
            <person name="Coutinho P.M."/>
            <person name="Csukai M."/>
            <person name="Dehal P."/>
            <person name="De Wit P."/>
            <person name="Donzelli B."/>
            <person name="van de Geest H.C."/>
            <person name="van Ham R.C.H.J."/>
            <person name="Hammond-Kosack K.E."/>
            <person name="Henrissat B."/>
            <person name="Kilian A."/>
            <person name="Kobayashi A.K."/>
            <person name="Koopmann E."/>
            <person name="Kourmpetis Y."/>
            <person name="Kuzniar A."/>
            <person name="Lindquist E."/>
            <person name="Lombard V."/>
            <person name="Maliepaard C."/>
            <person name="Martins N."/>
            <person name="Mehrabi R."/>
            <person name="Nap J.P.H."/>
            <person name="Ponomarenko A."/>
            <person name="Rudd J.J."/>
            <person name="Salamov A."/>
            <person name="Schmutz J."/>
            <person name="Schouten H.J."/>
            <person name="Shapiro H."/>
            <person name="Stergiopoulos I."/>
            <person name="Torriani S.F.F."/>
            <person name="Tu H."/>
            <person name="de Vries R.P."/>
            <person name="Waalwijk C."/>
            <person name="Ware S.B."/>
            <person name="Wiebenga A."/>
            <person name="Zwiers L.-H."/>
            <person name="Oliver R.P."/>
            <person name="Grigoriev I.V."/>
            <person name="Kema G.H.J."/>
        </authorList>
    </citation>
    <scope>NUCLEOTIDE SEQUENCE [LARGE SCALE GENOMIC DNA]</scope>
    <source>
        <strain>CBS 115943 / IPO323</strain>
    </source>
</reference>
<reference key="2">
    <citation type="journal article" date="2017" name="BMC Genomics">
        <title>In silico prediction and characterization of secondary metabolite biosynthetic gene clusters in the wheat pathogen Zymoseptoria tritici.</title>
        <authorList>
            <person name="Cairns T."/>
            <person name="Meyer V."/>
        </authorList>
    </citation>
    <scope>FUNCTION</scope>
    <scope>PATHWAY</scope>
</reference>
<dbReference type="EMBL" id="CM001206">
    <property type="protein sequence ID" value="EGP83310.1"/>
    <property type="molecule type" value="Genomic_DNA"/>
</dbReference>
<dbReference type="RefSeq" id="XP_003848334.1">
    <property type="nucleotide sequence ID" value="XM_003848286.1"/>
</dbReference>
<dbReference type="EnsemblFungi" id="Mycgr3T87993">
    <property type="protein sequence ID" value="Mycgr3P87993"/>
    <property type="gene ID" value="Mycgr3G87993"/>
</dbReference>
<dbReference type="GeneID" id="13396130"/>
<dbReference type="KEGG" id="ztr:MYCGRDRAFT_87993"/>
<dbReference type="eggNOG" id="KOG1721">
    <property type="taxonomic scope" value="Eukaryota"/>
</dbReference>
<dbReference type="HOGENOM" id="CLU_008362_0_0_1"/>
<dbReference type="InParanoid" id="F9XMW5"/>
<dbReference type="OMA" id="WTVFRCT"/>
<dbReference type="OrthoDB" id="40579at2759"/>
<dbReference type="Proteomes" id="UP000008062">
    <property type="component" value="Chromosome 11"/>
</dbReference>
<dbReference type="GO" id="GO:0005634">
    <property type="term" value="C:nucleus"/>
    <property type="evidence" value="ECO:0007669"/>
    <property type="project" value="UniProtKB-SubCell"/>
</dbReference>
<dbReference type="GO" id="GO:0003677">
    <property type="term" value="F:DNA binding"/>
    <property type="evidence" value="ECO:0007669"/>
    <property type="project" value="UniProtKB-KW"/>
</dbReference>
<dbReference type="GO" id="GO:0000981">
    <property type="term" value="F:DNA-binding transcription factor activity, RNA polymerase II-specific"/>
    <property type="evidence" value="ECO:0007669"/>
    <property type="project" value="InterPro"/>
</dbReference>
<dbReference type="GO" id="GO:0008270">
    <property type="term" value="F:zinc ion binding"/>
    <property type="evidence" value="ECO:0007669"/>
    <property type="project" value="UniProtKB-KW"/>
</dbReference>
<dbReference type="CDD" id="cd12148">
    <property type="entry name" value="fungal_TF_MHR"/>
    <property type="match status" value="1"/>
</dbReference>
<dbReference type="CDD" id="cd00067">
    <property type="entry name" value="GAL4"/>
    <property type="match status" value="1"/>
</dbReference>
<dbReference type="Gene3D" id="3.30.160.60">
    <property type="entry name" value="Classic Zinc Finger"/>
    <property type="match status" value="2"/>
</dbReference>
<dbReference type="Gene3D" id="4.10.240.10">
    <property type="entry name" value="Zn(2)-C6 fungal-type DNA-binding domain"/>
    <property type="match status" value="1"/>
</dbReference>
<dbReference type="InterPro" id="IPR036864">
    <property type="entry name" value="Zn2-C6_fun-type_DNA-bd_sf"/>
</dbReference>
<dbReference type="InterPro" id="IPR001138">
    <property type="entry name" value="Zn2Cys6_DnaBD"/>
</dbReference>
<dbReference type="InterPro" id="IPR036236">
    <property type="entry name" value="Znf_C2H2_sf"/>
</dbReference>
<dbReference type="InterPro" id="IPR013087">
    <property type="entry name" value="Znf_C2H2_type"/>
</dbReference>
<dbReference type="PANTHER" id="PTHR47660:SF2">
    <property type="entry name" value="TRANSCRIPTION FACTOR WITH C2H2 AND ZN(2)-CYS(6) DNA BINDING DOMAIN (EUROFUNG)"/>
    <property type="match status" value="1"/>
</dbReference>
<dbReference type="PANTHER" id="PTHR47660">
    <property type="entry name" value="TRANSCRIPTION FACTOR WITH C2H2 AND ZN(2)-CYS(6) DNA BINDING DOMAIN (EUROFUNG)-RELATED-RELATED"/>
    <property type="match status" value="1"/>
</dbReference>
<dbReference type="Pfam" id="PF00172">
    <property type="entry name" value="Zn_clus"/>
    <property type="match status" value="1"/>
</dbReference>
<dbReference type="SMART" id="SM00066">
    <property type="entry name" value="GAL4"/>
    <property type="match status" value="1"/>
</dbReference>
<dbReference type="SMART" id="SM00355">
    <property type="entry name" value="ZnF_C2H2"/>
    <property type="match status" value="2"/>
</dbReference>
<dbReference type="SUPFAM" id="SSF57667">
    <property type="entry name" value="beta-beta-alpha zinc fingers"/>
    <property type="match status" value="1"/>
</dbReference>
<dbReference type="SUPFAM" id="SSF57701">
    <property type="entry name" value="Zn2/Cys6 DNA-binding domain"/>
    <property type="match status" value="1"/>
</dbReference>
<dbReference type="PROSITE" id="PS00028">
    <property type="entry name" value="ZINC_FINGER_C2H2_1"/>
    <property type="match status" value="2"/>
</dbReference>
<dbReference type="PROSITE" id="PS50157">
    <property type="entry name" value="ZINC_FINGER_C2H2_2"/>
    <property type="match status" value="2"/>
</dbReference>
<dbReference type="PROSITE" id="PS00463">
    <property type="entry name" value="ZN2_CY6_FUNGAL_1"/>
    <property type="match status" value="1"/>
</dbReference>
<dbReference type="PROSITE" id="PS50048">
    <property type="entry name" value="ZN2_CY6_FUNGAL_2"/>
    <property type="match status" value="1"/>
</dbReference>
<feature type="chain" id="PRO_0000451092" description="Transcription factor MYCGRDRAFT_87993">
    <location>
        <begin position="1"/>
        <end position="978"/>
    </location>
</feature>
<feature type="zinc finger region" description="C2H2-type 1" evidence="1">
    <location>
        <begin position="2"/>
        <end position="24"/>
    </location>
</feature>
<feature type="zinc finger region" description="C2H2-type 2" evidence="1">
    <location>
        <begin position="30"/>
        <end position="52"/>
    </location>
</feature>
<feature type="DNA-binding region" description="Zn(2)-C6 fungal-type" evidence="2">
    <location>
        <begin position="79"/>
        <end position="105"/>
    </location>
</feature>
<feature type="region of interest" description="Disordered" evidence="3">
    <location>
        <begin position="113"/>
        <end position="231"/>
    </location>
</feature>
<feature type="region of interest" description="Disordered" evidence="3">
    <location>
        <begin position="426"/>
        <end position="445"/>
    </location>
</feature>
<feature type="compositionally biased region" description="Low complexity" evidence="3">
    <location>
        <begin position="152"/>
        <end position="165"/>
    </location>
</feature>
<feature type="compositionally biased region" description="Polar residues" evidence="3">
    <location>
        <begin position="432"/>
        <end position="445"/>
    </location>
</feature>
<gene>
    <name type="ORF">MYCGRDRAFT_87993</name>
</gene>
<name>TF29_ZYMTI</name>
<comment type="function">
    <text evidence="5">Transcription factor; part of the gene cluster 29 that mediates the biosynthesis of dihydroxynaphthalene (DHN)-melanin, a bluish-green pigment forming a dark layer in the conidial wall that protects the conidia from UV radiations.</text>
</comment>
<comment type="subcellular location">
    <subcellularLocation>
        <location evidence="2">Nucleus</location>
    </subcellularLocation>
</comment>
<sequence length="978" mass="109089">MVFCTYCGQSFTRDEHLERHILTHTNVKPFKCFTCHMSFARRDLLQRHYTVHGRDQNQNEIPAVNGMIPKSAGRTPIACSNCAKTKTKCDKKFPCSRCAGRNLRCTLRPTRRASKNANRVGATLESATDVPTEVTTVNVEATSKDTRAQENSSSPSSQKSGTPISIGPIMEETPDIAPPQPFTEQVNGGPTPPEFSPDLQESFMDHNLMSGFPGLTNPSKDSSDDGSSPRFLLDWSQMQMPLGYDNMIQSDLMLDPELSFDPNSVPLAPHADGILSIMPELANGGMESLITPFETPKMSRSFVELGLGNSNPAFHSHRHQSMPSVQSIPNSGNEMPAMIAAQDGWSAFRCTPTLPSSSCPKTAKLNLEQLEETLRNHEGWVSWSPRWEDNDLAGGGDHLTVMQLHESTRDKLLAIMQSFLHKALETHREGRGTSNGSHSPNPSGASNFVLLPPGRVLEYFLRSYSNSFERYFPLTSRSTLDANELMHCYNDRAASILVLLMIAQGAANIPSPEARMLTGGLTEACRISLFDLIERNIIMSGDPIVLHSALLFTVQAAWSGDKWQMDIAMGQRGMYFAMLRHSGVLDRSSHAASAQPQRTLEQLWTDWIQNESRSRLIYSWVMVDQDLALFHDTAPLFSVTEFGAPMPDADRLWHAKSAEQWSSTFERVHEFSSGFSSVGSGARPLSLRDLFRHFLDDDLIPMGIEMTPLQLRLLLHPLQSMVCQFSQLLSCFAPATYRTSISVHPNQAQPSSRNISQSSTRTRLAEVQALLQRWFDLAERYLKANPLCALMQTNLILFHLISLNAVTNFPEIERLARRENVDGTYHQLLWLHKRCIPDVEEAVFHCGQIFRLVRSMPRGVRPPWWAGAIYRVALILWTDSLTHKDALTSTSPQGNGMFPSPIAGPSFAIDALPPDHALIVRYLTKREGVPCVTKLDGSQMGLERAYPVLRHCVEVIDEGCSTRFSDAIRGKLERLSRG</sequence>
<organism>
    <name type="scientific">Zymoseptoria tritici (strain CBS 115943 / IPO323)</name>
    <name type="common">Speckled leaf blotch fungus</name>
    <name type="synonym">Septoria tritici</name>
    <dbReference type="NCBI Taxonomy" id="336722"/>
    <lineage>
        <taxon>Eukaryota</taxon>
        <taxon>Fungi</taxon>
        <taxon>Dikarya</taxon>
        <taxon>Ascomycota</taxon>
        <taxon>Pezizomycotina</taxon>
        <taxon>Dothideomycetes</taxon>
        <taxon>Dothideomycetidae</taxon>
        <taxon>Mycosphaerellales</taxon>
        <taxon>Mycosphaerellaceae</taxon>
        <taxon>Zymoseptoria</taxon>
    </lineage>
</organism>